<comment type="subcellular location">
    <subcellularLocation>
        <location evidence="1">Cell membrane</location>
        <topology evidence="1">Multi-pass membrane protein</topology>
    </subcellularLocation>
</comment>
<comment type="similarity">
    <text evidence="1">Belongs to the UPF0391 family.</text>
</comment>
<protein>
    <recommendedName>
        <fullName evidence="1">UPF0391 membrane protein Bcep18194_C7021</fullName>
    </recommendedName>
</protein>
<feature type="chain" id="PRO_0000256725" description="UPF0391 membrane protein Bcep18194_C7021">
    <location>
        <begin position="1"/>
        <end position="53"/>
    </location>
</feature>
<feature type="transmembrane region" description="Helical" evidence="1">
    <location>
        <begin position="5"/>
        <end position="25"/>
    </location>
</feature>
<feature type="transmembrane region" description="Helical" evidence="1">
    <location>
        <begin position="30"/>
        <end position="50"/>
    </location>
</feature>
<proteinExistence type="inferred from homology"/>
<reference key="1">
    <citation type="submission" date="2005-10" db="EMBL/GenBank/DDBJ databases">
        <title>Complete sequence of chromosome 3 of Burkholderia sp. 383.</title>
        <authorList>
            <consortium name="US DOE Joint Genome Institute"/>
            <person name="Copeland A."/>
            <person name="Lucas S."/>
            <person name="Lapidus A."/>
            <person name="Barry K."/>
            <person name="Detter J.C."/>
            <person name="Glavina T."/>
            <person name="Hammon N."/>
            <person name="Israni S."/>
            <person name="Pitluck S."/>
            <person name="Chain P."/>
            <person name="Malfatti S."/>
            <person name="Shin M."/>
            <person name="Vergez L."/>
            <person name="Schmutz J."/>
            <person name="Larimer F."/>
            <person name="Land M."/>
            <person name="Kyrpides N."/>
            <person name="Lykidis A."/>
            <person name="Richardson P."/>
        </authorList>
    </citation>
    <scope>NUCLEOTIDE SEQUENCE [LARGE SCALE GENOMIC DNA]</scope>
    <source>
        <strain>ATCC 17760 / DSM 23089 / LMG 22485 / NCIMB 9086 / R18194 / 383</strain>
    </source>
</reference>
<accession>Q39N99</accession>
<name>Y7021_BURL3</name>
<evidence type="ECO:0000255" key="1">
    <source>
        <dbReference type="HAMAP-Rule" id="MF_01361"/>
    </source>
</evidence>
<keyword id="KW-1003">Cell membrane</keyword>
<keyword id="KW-0472">Membrane</keyword>
<keyword id="KW-0812">Transmembrane</keyword>
<keyword id="KW-1133">Transmembrane helix</keyword>
<organism>
    <name type="scientific">Burkholderia lata (strain ATCC 17760 / DSM 23089 / LMG 22485 / NCIMB 9086 / R18194 / 383)</name>
    <dbReference type="NCBI Taxonomy" id="482957"/>
    <lineage>
        <taxon>Bacteria</taxon>
        <taxon>Pseudomonadati</taxon>
        <taxon>Pseudomonadota</taxon>
        <taxon>Betaproteobacteria</taxon>
        <taxon>Burkholderiales</taxon>
        <taxon>Burkholderiaceae</taxon>
        <taxon>Burkholderia</taxon>
        <taxon>Burkholderia cepacia complex</taxon>
    </lineage>
</organism>
<gene>
    <name type="ordered locus">Bcep18194_C7021</name>
</gene>
<sequence length="53" mass="5748">MLRYAVIFFIIAIVAAVFGFGGIAAGAAEIAKILFYIFVVIFLVTLLLGVVRR</sequence>
<dbReference type="EMBL" id="CP000150">
    <property type="protein sequence ID" value="ABB06067.1"/>
    <property type="molecule type" value="Genomic_DNA"/>
</dbReference>
<dbReference type="RefSeq" id="WP_011349711.1">
    <property type="nucleotide sequence ID" value="NZ_WNDV01000011.1"/>
</dbReference>
<dbReference type="SMR" id="Q39N99"/>
<dbReference type="KEGG" id="bur:Bcep18194_C7021"/>
<dbReference type="PATRIC" id="fig|482957.22.peg.7570"/>
<dbReference type="HOGENOM" id="CLU_187346_0_1_4"/>
<dbReference type="Proteomes" id="UP000002705">
    <property type="component" value="Chromosome 3"/>
</dbReference>
<dbReference type="GO" id="GO:0005886">
    <property type="term" value="C:plasma membrane"/>
    <property type="evidence" value="ECO:0007669"/>
    <property type="project" value="UniProtKB-SubCell"/>
</dbReference>
<dbReference type="HAMAP" id="MF_01361">
    <property type="entry name" value="UPF0391"/>
    <property type="match status" value="1"/>
</dbReference>
<dbReference type="InterPro" id="IPR009760">
    <property type="entry name" value="DUF1328"/>
</dbReference>
<dbReference type="NCBIfam" id="NF010226">
    <property type="entry name" value="PRK13682.1-1"/>
    <property type="match status" value="1"/>
</dbReference>
<dbReference type="NCBIfam" id="NF010229">
    <property type="entry name" value="PRK13682.1-4"/>
    <property type="match status" value="1"/>
</dbReference>
<dbReference type="Pfam" id="PF07043">
    <property type="entry name" value="DUF1328"/>
    <property type="match status" value="1"/>
</dbReference>
<dbReference type="PIRSF" id="PIRSF036466">
    <property type="entry name" value="UCP036466"/>
    <property type="match status" value="1"/>
</dbReference>